<evidence type="ECO:0000255" key="1">
    <source>
        <dbReference type="HAMAP-Rule" id="MF_01151"/>
    </source>
</evidence>
<name>GRPE_FRAT1</name>
<gene>
    <name evidence="1" type="primary">grpE</name>
    <name type="ordered locus">FTF1270c</name>
</gene>
<protein>
    <recommendedName>
        <fullName evidence="1">Protein GrpE</fullName>
    </recommendedName>
    <alternativeName>
        <fullName evidence="1">HSP-70 cofactor</fullName>
    </alternativeName>
</protein>
<keyword id="KW-0143">Chaperone</keyword>
<keyword id="KW-0963">Cytoplasm</keyword>
<keyword id="KW-0346">Stress response</keyword>
<accession>Q14GW8</accession>
<feature type="chain" id="PRO_1000053579" description="Protein GrpE">
    <location>
        <begin position="1"/>
        <end position="195"/>
    </location>
</feature>
<comment type="function">
    <text evidence="1">Participates actively in the response to hyperosmotic and heat shock by preventing the aggregation of stress-denatured proteins, in association with DnaK and GrpE. It is the nucleotide exchange factor for DnaK and may function as a thermosensor. Unfolded proteins bind initially to DnaJ; upon interaction with the DnaJ-bound protein, DnaK hydrolyzes its bound ATP, resulting in the formation of a stable complex. GrpE releases ADP from DnaK; ATP binding to DnaK triggers the release of the substrate protein, thus completing the reaction cycle. Several rounds of ATP-dependent interactions between DnaJ, DnaK and GrpE are required for fully efficient folding.</text>
</comment>
<comment type="subunit">
    <text evidence="1">Homodimer.</text>
</comment>
<comment type="subcellular location">
    <subcellularLocation>
        <location evidence="1">Cytoplasm</location>
    </subcellularLocation>
</comment>
<comment type="similarity">
    <text evidence="1">Belongs to the GrpE family.</text>
</comment>
<reference key="1">
    <citation type="journal article" date="2007" name="PLoS ONE">
        <title>Genome sequencing shows that European isolates of Francisella tularensis subspecies tularensis are almost identical to US laboratory strain Schu S4.</title>
        <authorList>
            <person name="Chaudhuri R.R."/>
            <person name="Ren C.-P."/>
            <person name="Desmond L."/>
            <person name="Vincent G.A."/>
            <person name="Silman N.J."/>
            <person name="Brehm J.K."/>
            <person name="Elmore M.J."/>
            <person name="Hudson M.J."/>
            <person name="Forsman M."/>
            <person name="Isherwood K.E."/>
            <person name="Gurycova D."/>
            <person name="Minton N.P."/>
            <person name="Titball R.W."/>
            <person name="Pallen M.J."/>
            <person name="Vipond R."/>
        </authorList>
    </citation>
    <scope>NUCLEOTIDE SEQUENCE [LARGE SCALE GENOMIC DNA]</scope>
    <source>
        <strain>FSC 198</strain>
    </source>
</reference>
<proteinExistence type="inferred from homology"/>
<dbReference type="EMBL" id="AM286280">
    <property type="protein sequence ID" value="CAL09286.1"/>
    <property type="molecule type" value="Genomic_DNA"/>
</dbReference>
<dbReference type="RefSeq" id="WP_003021933.1">
    <property type="nucleotide sequence ID" value="NC_008245.1"/>
</dbReference>
<dbReference type="SMR" id="Q14GW8"/>
<dbReference type="KEGG" id="ftf:FTF1270c"/>
<dbReference type="HOGENOM" id="CLU_057217_6_0_6"/>
<dbReference type="GO" id="GO:0005829">
    <property type="term" value="C:cytosol"/>
    <property type="evidence" value="ECO:0007669"/>
    <property type="project" value="TreeGrafter"/>
</dbReference>
<dbReference type="GO" id="GO:0000774">
    <property type="term" value="F:adenyl-nucleotide exchange factor activity"/>
    <property type="evidence" value="ECO:0007669"/>
    <property type="project" value="InterPro"/>
</dbReference>
<dbReference type="GO" id="GO:0042803">
    <property type="term" value="F:protein homodimerization activity"/>
    <property type="evidence" value="ECO:0007669"/>
    <property type="project" value="InterPro"/>
</dbReference>
<dbReference type="GO" id="GO:0051087">
    <property type="term" value="F:protein-folding chaperone binding"/>
    <property type="evidence" value="ECO:0007669"/>
    <property type="project" value="InterPro"/>
</dbReference>
<dbReference type="GO" id="GO:0051082">
    <property type="term" value="F:unfolded protein binding"/>
    <property type="evidence" value="ECO:0007669"/>
    <property type="project" value="TreeGrafter"/>
</dbReference>
<dbReference type="GO" id="GO:0006457">
    <property type="term" value="P:protein folding"/>
    <property type="evidence" value="ECO:0007669"/>
    <property type="project" value="InterPro"/>
</dbReference>
<dbReference type="CDD" id="cd00446">
    <property type="entry name" value="GrpE"/>
    <property type="match status" value="1"/>
</dbReference>
<dbReference type="FunFam" id="2.30.22.10:FF:000001">
    <property type="entry name" value="Protein GrpE"/>
    <property type="match status" value="1"/>
</dbReference>
<dbReference type="Gene3D" id="3.90.20.20">
    <property type="match status" value="1"/>
</dbReference>
<dbReference type="Gene3D" id="2.30.22.10">
    <property type="entry name" value="Head domain of nucleotide exchange factor GrpE"/>
    <property type="match status" value="1"/>
</dbReference>
<dbReference type="HAMAP" id="MF_01151">
    <property type="entry name" value="GrpE"/>
    <property type="match status" value="1"/>
</dbReference>
<dbReference type="InterPro" id="IPR000740">
    <property type="entry name" value="GrpE"/>
</dbReference>
<dbReference type="InterPro" id="IPR013805">
    <property type="entry name" value="GrpE_coiled_coil"/>
</dbReference>
<dbReference type="InterPro" id="IPR009012">
    <property type="entry name" value="GrpE_head"/>
</dbReference>
<dbReference type="NCBIfam" id="NF010737">
    <property type="entry name" value="PRK14139.1"/>
    <property type="match status" value="1"/>
</dbReference>
<dbReference type="NCBIfam" id="NF010738">
    <property type="entry name" value="PRK14140.1"/>
    <property type="match status" value="1"/>
</dbReference>
<dbReference type="NCBIfam" id="NF010746">
    <property type="entry name" value="PRK14148.1"/>
    <property type="match status" value="1"/>
</dbReference>
<dbReference type="NCBIfam" id="NF010748">
    <property type="entry name" value="PRK14150.1"/>
    <property type="match status" value="1"/>
</dbReference>
<dbReference type="PANTHER" id="PTHR21237">
    <property type="entry name" value="GRPE PROTEIN"/>
    <property type="match status" value="1"/>
</dbReference>
<dbReference type="PANTHER" id="PTHR21237:SF23">
    <property type="entry name" value="GRPE PROTEIN HOMOLOG, MITOCHONDRIAL"/>
    <property type="match status" value="1"/>
</dbReference>
<dbReference type="Pfam" id="PF01025">
    <property type="entry name" value="GrpE"/>
    <property type="match status" value="1"/>
</dbReference>
<dbReference type="PRINTS" id="PR00773">
    <property type="entry name" value="GRPEPROTEIN"/>
</dbReference>
<dbReference type="SUPFAM" id="SSF58014">
    <property type="entry name" value="Coiled-coil domain of nucleotide exchange factor GrpE"/>
    <property type="match status" value="1"/>
</dbReference>
<dbReference type="SUPFAM" id="SSF51064">
    <property type="entry name" value="Head domain of nucleotide exchange factor GrpE"/>
    <property type="match status" value="1"/>
</dbReference>
<dbReference type="PROSITE" id="PS01071">
    <property type="entry name" value="GRPE"/>
    <property type="match status" value="1"/>
</dbReference>
<organism>
    <name type="scientific">Francisella tularensis subsp. tularensis (strain FSC 198)</name>
    <dbReference type="NCBI Taxonomy" id="393115"/>
    <lineage>
        <taxon>Bacteria</taxon>
        <taxon>Pseudomonadati</taxon>
        <taxon>Pseudomonadota</taxon>
        <taxon>Gammaproteobacteria</taxon>
        <taxon>Thiotrichales</taxon>
        <taxon>Francisellaceae</taxon>
        <taxon>Francisella</taxon>
    </lineage>
</organism>
<sequence>MSKQEKSNVEDKSLDIETAAQVETAQESASGALEELSVEEQLERAKDTIKELEDSCDQFKDEALRAKAEMENIRKRAERDVSNARKFGIEKFSKELLPVIDSIEQALKHEVKLEEAIAMKEGIELTAKMLVDILKKNGVEELDPKGEKFDPNLHEAMAMIPNPEFEDNTIFDVFQKGYMLNGRIVRAAKVVIVKN</sequence>